<name>BDBC_DEIRA</name>
<gene>
    <name type="ordered locus">DR_0754</name>
</gene>
<protein>
    <recommendedName>
        <fullName evidence="1">Probable disulfide formation protein</fullName>
    </recommendedName>
    <alternativeName>
        <fullName evidence="1">Disulfide oxidoreductase</fullName>
    </alternativeName>
    <alternativeName>
        <fullName evidence="1">Thiol-disulfide oxidoreductase</fullName>
    </alternativeName>
</protein>
<comment type="function">
    <text evidence="1">Required for disulfide bond formation in some proteins.</text>
</comment>
<comment type="subcellular location">
    <subcellularLocation>
        <location evidence="1">Cell membrane</location>
        <topology evidence="1">Multi-pass membrane protein</topology>
    </subcellularLocation>
</comment>
<comment type="similarity">
    <text evidence="1">Belongs to the DsbB family. BdbC subfamily.</text>
</comment>
<dbReference type="EMBL" id="AE000513">
    <property type="protein sequence ID" value="AAF10333.1"/>
    <property type="molecule type" value="Genomic_DNA"/>
</dbReference>
<dbReference type="PIR" id="F75478">
    <property type="entry name" value="F75478"/>
</dbReference>
<dbReference type="RefSeq" id="NP_294478.1">
    <property type="nucleotide sequence ID" value="NC_001263.1"/>
</dbReference>
<dbReference type="RefSeq" id="WP_010887400.1">
    <property type="nucleotide sequence ID" value="NC_001263.1"/>
</dbReference>
<dbReference type="FunCoup" id="Q9RWB5">
    <property type="interactions" value="9"/>
</dbReference>
<dbReference type="STRING" id="243230.DR_0754"/>
<dbReference type="PaxDb" id="243230-DR_0754"/>
<dbReference type="EnsemblBacteria" id="AAF10333">
    <property type="protein sequence ID" value="AAF10333"/>
    <property type="gene ID" value="DR_0754"/>
</dbReference>
<dbReference type="GeneID" id="69516999"/>
<dbReference type="KEGG" id="dra:DR_0754"/>
<dbReference type="PATRIC" id="fig|243230.17.peg.934"/>
<dbReference type="eggNOG" id="COG1495">
    <property type="taxonomic scope" value="Bacteria"/>
</dbReference>
<dbReference type="HOGENOM" id="CLU_128688_0_0_0"/>
<dbReference type="InParanoid" id="Q9RWB5"/>
<dbReference type="OrthoDB" id="158402at2"/>
<dbReference type="Proteomes" id="UP000002524">
    <property type="component" value="Chromosome 1"/>
</dbReference>
<dbReference type="GO" id="GO:0005886">
    <property type="term" value="C:plasma membrane"/>
    <property type="evidence" value="ECO:0007669"/>
    <property type="project" value="UniProtKB-SubCell"/>
</dbReference>
<dbReference type="GO" id="GO:0015035">
    <property type="term" value="F:protein-disulfide reductase activity"/>
    <property type="evidence" value="ECO:0007669"/>
    <property type="project" value="UniProtKB-UniRule"/>
</dbReference>
<dbReference type="GO" id="GO:0006457">
    <property type="term" value="P:protein folding"/>
    <property type="evidence" value="ECO:0007669"/>
    <property type="project" value="InterPro"/>
</dbReference>
<dbReference type="Gene3D" id="1.20.1550.10">
    <property type="entry name" value="DsbB-like"/>
    <property type="match status" value="1"/>
</dbReference>
<dbReference type="HAMAP" id="MF_00287">
    <property type="entry name" value="BdbC"/>
    <property type="match status" value="1"/>
</dbReference>
<dbReference type="InterPro" id="IPR003752">
    <property type="entry name" value="DiS_bond_form_DsbB/BdbC"/>
</dbReference>
<dbReference type="InterPro" id="IPR012187">
    <property type="entry name" value="Disulphide_bond_form_BdbC"/>
</dbReference>
<dbReference type="InterPro" id="IPR023380">
    <property type="entry name" value="DsbB-like_sf"/>
</dbReference>
<dbReference type="PANTHER" id="PTHR43469">
    <property type="entry name" value="DISULFIDE FORMATION PROTEIN-RELATED"/>
    <property type="match status" value="1"/>
</dbReference>
<dbReference type="PANTHER" id="PTHR43469:SF1">
    <property type="entry name" value="SPBETA PROPHAGE-DERIVED DISULFIDE BOND FORMATION PROTEIN B"/>
    <property type="match status" value="1"/>
</dbReference>
<dbReference type="Pfam" id="PF02600">
    <property type="entry name" value="DsbB"/>
    <property type="match status" value="1"/>
</dbReference>
<dbReference type="PIRSF" id="PIRSF036659">
    <property type="entry name" value="BdbC"/>
    <property type="match status" value="1"/>
</dbReference>
<dbReference type="SUPFAM" id="SSF158442">
    <property type="entry name" value="DsbB-like"/>
    <property type="match status" value="1"/>
</dbReference>
<evidence type="ECO:0000255" key="1">
    <source>
        <dbReference type="HAMAP-Rule" id="MF_00287"/>
    </source>
</evidence>
<keyword id="KW-1003">Cell membrane</keyword>
<keyword id="KW-0143">Chaperone</keyword>
<keyword id="KW-1015">Disulfide bond</keyword>
<keyword id="KW-0249">Electron transport</keyword>
<keyword id="KW-0472">Membrane</keyword>
<keyword id="KW-0560">Oxidoreductase</keyword>
<keyword id="KW-0676">Redox-active center</keyword>
<keyword id="KW-1185">Reference proteome</keyword>
<keyword id="KW-0812">Transmembrane</keyword>
<keyword id="KW-1133">Transmembrane helix</keyword>
<keyword id="KW-0813">Transport</keyword>
<feature type="chain" id="PRO_0000059384" description="Probable disulfide formation protein">
    <location>
        <begin position="1"/>
        <end position="153"/>
    </location>
</feature>
<feature type="transmembrane region" description="Helical" evidence="1">
    <location>
        <begin position="4"/>
        <end position="23"/>
    </location>
</feature>
<feature type="transmembrane region" description="Helical" evidence="1">
    <location>
        <begin position="38"/>
        <end position="57"/>
    </location>
</feature>
<feature type="transmembrane region" description="Helical" evidence="1">
    <location>
        <begin position="64"/>
        <end position="81"/>
    </location>
</feature>
<feature type="transmembrane region" description="Helical" evidence="1">
    <location>
        <begin position="117"/>
        <end position="139"/>
    </location>
</feature>
<feature type="disulfide bond" description="Redox-active" evidence="1">
    <location>
        <begin position="33"/>
        <end position="36"/>
    </location>
</feature>
<feature type="disulfide bond" description="Redox-active" evidence="1">
    <location>
        <begin position="93"/>
        <end position="101"/>
    </location>
</feature>
<organism>
    <name type="scientific">Deinococcus radiodurans (strain ATCC 13939 / DSM 20539 / JCM 16871 / CCUG 27074 / LMG 4051 / NBRC 15346 / NCIMB 9279 / VKM B-1422 / R1)</name>
    <dbReference type="NCBI Taxonomy" id="243230"/>
    <lineage>
        <taxon>Bacteria</taxon>
        <taxon>Thermotogati</taxon>
        <taxon>Deinococcota</taxon>
        <taxon>Deinococci</taxon>
        <taxon>Deinococcales</taxon>
        <taxon>Deinococcaceae</taxon>
        <taxon>Deinococcus</taxon>
    </lineage>
</organism>
<accession>Q9RWB5</accession>
<sequence>MNRDTRLYLAWLVALAATLGSLYFSEIRHFNPCPLCWAQRIFMYPLAVILGIAAFVGDHGVRRYVLPLAALGLGFAIFQNLETWGFVQSIKACTVNAAAACNTPWPVWGTSQDTLNRALTIPVLSMIAFALILALLSWPRQRVTVPESAAVQG</sequence>
<proteinExistence type="inferred from homology"/>
<reference key="1">
    <citation type="journal article" date="1999" name="Science">
        <title>Genome sequence of the radioresistant bacterium Deinococcus radiodurans R1.</title>
        <authorList>
            <person name="White O."/>
            <person name="Eisen J.A."/>
            <person name="Heidelberg J.F."/>
            <person name="Hickey E.K."/>
            <person name="Peterson J.D."/>
            <person name="Dodson R.J."/>
            <person name="Haft D.H."/>
            <person name="Gwinn M.L."/>
            <person name="Nelson W.C."/>
            <person name="Richardson D.L."/>
            <person name="Moffat K.S."/>
            <person name="Qin H."/>
            <person name="Jiang L."/>
            <person name="Pamphile W."/>
            <person name="Crosby M."/>
            <person name="Shen M."/>
            <person name="Vamathevan J.J."/>
            <person name="Lam P."/>
            <person name="McDonald L.A."/>
            <person name="Utterback T.R."/>
            <person name="Zalewski C."/>
            <person name="Makarova K.S."/>
            <person name="Aravind L."/>
            <person name="Daly M.J."/>
            <person name="Minton K.W."/>
            <person name="Fleischmann R.D."/>
            <person name="Ketchum K.A."/>
            <person name="Nelson K.E."/>
            <person name="Salzberg S.L."/>
            <person name="Smith H.O."/>
            <person name="Venter J.C."/>
            <person name="Fraser C.M."/>
        </authorList>
    </citation>
    <scope>NUCLEOTIDE SEQUENCE [LARGE SCALE GENOMIC DNA]</scope>
    <source>
        <strain>ATCC 13939 / DSM 20539 / JCM 16871 / CCUG 27074 / LMG 4051 / NBRC 15346 / NCIMB 9279 / VKM B-1422 / R1</strain>
    </source>
</reference>